<organism>
    <name type="scientific">Escherichia coli O17:K52:H18 (strain UMN026 / ExPEC)</name>
    <dbReference type="NCBI Taxonomy" id="585056"/>
    <lineage>
        <taxon>Bacteria</taxon>
        <taxon>Pseudomonadati</taxon>
        <taxon>Pseudomonadota</taxon>
        <taxon>Gammaproteobacteria</taxon>
        <taxon>Enterobacterales</taxon>
        <taxon>Enterobacteriaceae</taxon>
        <taxon>Escherichia</taxon>
    </lineage>
</organism>
<feature type="chain" id="PRO_1000186914" description="D-phenylhydantoinase">
    <location>
        <begin position="1"/>
        <end position="461"/>
    </location>
</feature>
<feature type="binding site" evidence="1">
    <location>
        <position position="59"/>
    </location>
    <ligand>
        <name>a divalent metal cation</name>
        <dbReference type="ChEBI" id="CHEBI:60240"/>
        <label>1</label>
    </ligand>
</feature>
<feature type="binding site" evidence="1">
    <location>
        <position position="61"/>
    </location>
    <ligand>
        <name>a divalent metal cation</name>
        <dbReference type="ChEBI" id="CHEBI:60240"/>
        <label>1</label>
    </ligand>
</feature>
<feature type="binding site" description="via carbamate group" evidence="1">
    <location>
        <position position="151"/>
    </location>
    <ligand>
        <name>a divalent metal cation</name>
        <dbReference type="ChEBI" id="CHEBI:60240"/>
        <label>1</label>
    </ligand>
</feature>
<feature type="binding site" description="via carbamate group" evidence="1">
    <location>
        <position position="151"/>
    </location>
    <ligand>
        <name>a divalent metal cation</name>
        <dbReference type="ChEBI" id="CHEBI:60240"/>
        <label>2</label>
    </ligand>
</feature>
<feature type="binding site" evidence="1">
    <location>
        <position position="156"/>
    </location>
    <ligand>
        <name>substrate</name>
    </ligand>
</feature>
<feature type="binding site" evidence="1">
    <location>
        <position position="182"/>
    </location>
    <ligand>
        <name>a divalent metal cation</name>
        <dbReference type="ChEBI" id="CHEBI:60240"/>
        <label>2</label>
    </ligand>
</feature>
<feature type="binding site" evidence="1">
    <location>
        <position position="239"/>
    </location>
    <ligand>
        <name>a divalent metal cation</name>
        <dbReference type="ChEBI" id="CHEBI:60240"/>
        <label>2</label>
    </ligand>
</feature>
<feature type="binding site" evidence="1">
    <location>
        <position position="286"/>
    </location>
    <ligand>
        <name>substrate</name>
    </ligand>
</feature>
<feature type="binding site" evidence="1">
    <location>
        <position position="313"/>
    </location>
    <ligand>
        <name>a divalent metal cation</name>
        <dbReference type="ChEBI" id="CHEBI:60240"/>
        <label>1</label>
    </ligand>
</feature>
<feature type="binding site" evidence="1">
    <location>
        <position position="335"/>
    </location>
    <ligand>
        <name>substrate</name>
    </ligand>
</feature>
<feature type="modified residue" description="N6-carboxylysine" evidence="1">
    <location>
        <position position="151"/>
    </location>
</feature>
<sequence>MRVLIKNGTVVNADGQAKQDLLIESAIVRQLGNNISPQLPYEEIDATGCYVFPGGVDVHTHFNIDVGIARSCDDFFTGTRAAACGGTTTIIDHMGFGPNGCRLRHQLEVYRGYAAHKAVIDYSFHGVIQHINHAILDEIPMMVEEGLSSFKLYLTYQYKLNDDEVLQALRRLHESGALTTVHPENDAAIASKRAEFIAAGLTAPRYHALSRPLECEAEAIARMINLAQIAGNAPLYIVHLSNGLGLDYLRLARANHQPVWVETCPQYLLLDERSYDTEDGMKFILSPPLRNVREQDKLWCGISDGAIDVVATDHCTFSMAQRLQISKGDFSRCPNGLPGVENRMQLLFSSGVMTGRITPERFVELTSAMPARLFGLWPQKGLLAPGSDGDVVIIDPRQSQQIQHRHLHDNADYSPWEGFTCQGAIVRTLSRGETIFCDGTFTGKAGRGRFLRRKPFVPPVL</sequence>
<proteinExistence type="inferred from homology"/>
<accession>B7N7B8</accession>
<comment type="function">
    <text evidence="1">Catalyzes the stereospecific hydrolysis of the cyclic amide bond of D-hydantoin derivatives with an aromatic side chains at the 5'-position. Has no activity on dihydropyrimidines. The physiological function is unknown.</text>
</comment>
<comment type="catalytic activity">
    <reaction evidence="1">
        <text>D-5-phenylhydantoin + H2O = N-carbamoyl-D-phenylglycine + H(+)</text>
        <dbReference type="Rhea" id="RHEA:51664"/>
        <dbReference type="ChEBI" id="CHEBI:15377"/>
        <dbReference type="ChEBI" id="CHEBI:15378"/>
        <dbReference type="ChEBI" id="CHEBI:140750"/>
        <dbReference type="ChEBI" id="CHEBI:140758"/>
    </reaction>
</comment>
<comment type="cofactor">
    <cofactor evidence="1">
        <name>a divalent metal cation</name>
        <dbReference type="ChEBI" id="CHEBI:60240"/>
    </cofactor>
    <text evidence="1">Binds 2 divalent metal cations per subunit.</text>
</comment>
<comment type="subunit">
    <text evidence="1">Homotetramer.</text>
</comment>
<comment type="PTM">
    <text evidence="1">Carboxylation allows a single lysine to coordinate two divalent metal cations.</text>
</comment>
<comment type="similarity">
    <text evidence="1">Belongs to the metallo-dependent hydrolases superfamily. Hydantoinase/dihydropyrimidinase family.</text>
</comment>
<name>PHYDA_ECOLU</name>
<dbReference type="EC" id="3.5.2.-" evidence="1"/>
<dbReference type="EMBL" id="CU928163">
    <property type="protein sequence ID" value="CAR14380.1"/>
    <property type="molecule type" value="Genomic_DNA"/>
</dbReference>
<dbReference type="RefSeq" id="WP_001264439.1">
    <property type="nucleotide sequence ID" value="NC_011751.1"/>
</dbReference>
<dbReference type="RefSeq" id="YP_002413899.1">
    <property type="nucleotide sequence ID" value="NC_011751.1"/>
</dbReference>
<dbReference type="SMR" id="B7N7B8"/>
<dbReference type="STRING" id="585056.ECUMN_3216"/>
<dbReference type="KEGG" id="eum:ECUMN_3216"/>
<dbReference type="PATRIC" id="fig|585056.7.peg.3389"/>
<dbReference type="HOGENOM" id="CLU_015572_2_0_6"/>
<dbReference type="Proteomes" id="UP000007097">
    <property type="component" value="Chromosome"/>
</dbReference>
<dbReference type="GO" id="GO:0005829">
    <property type="term" value="C:cytosol"/>
    <property type="evidence" value="ECO:0007669"/>
    <property type="project" value="TreeGrafter"/>
</dbReference>
<dbReference type="GO" id="GO:0016812">
    <property type="term" value="F:hydrolase activity, acting on carbon-nitrogen (but not peptide) bonds, in cyclic amides"/>
    <property type="evidence" value="ECO:0007669"/>
    <property type="project" value="UniProtKB-UniRule"/>
</dbReference>
<dbReference type="GO" id="GO:0046872">
    <property type="term" value="F:metal ion binding"/>
    <property type="evidence" value="ECO:0007669"/>
    <property type="project" value="UniProtKB-KW"/>
</dbReference>
<dbReference type="GO" id="GO:0006208">
    <property type="term" value="P:pyrimidine nucleobase catabolic process"/>
    <property type="evidence" value="ECO:0007669"/>
    <property type="project" value="InterPro"/>
</dbReference>
<dbReference type="CDD" id="cd01314">
    <property type="entry name" value="D-HYD"/>
    <property type="match status" value="1"/>
</dbReference>
<dbReference type="FunFam" id="3.20.20.140:FF:000026">
    <property type="entry name" value="D-phenylhydantoinase"/>
    <property type="match status" value="1"/>
</dbReference>
<dbReference type="Gene3D" id="3.20.20.140">
    <property type="entry name" value="Metal-dependent hydrolases"/>
    <property type="match status" value="1"/>
</dbReference>
<dbReference type="Gene3D" id="2.30.40.10">
    <property type="entry name" value="Urease, subunit C, domain 1"/>
    <property type="match status" value="1"/>
</dbReference>
<dbReference type="HAMAP" id="MF_01644">
    <property type="entry name" value="D_hydantoinase"/>
    <property type="match status" value="1"/>
</dbReference>
<dbReference type="InterPro" id="IPR006680">
    <property type="entry name" value="Amidohydro-rel"/>
</dbReference>
<dbReference type="InterPro" id="IPR023766">
    <property type="entry name" value="D_phenylhydantoinase"/>
</dbReference>
<dbReference type="InterPro" id="IPR011778">
    <property type="entry name" value="Hydantoinase/dihydroPyrase"/>
</dbReference>
<dbReference type="InterPro" id="IPR011059">
    <property type="entry name" value="Metal-dep_hydrolase_composite"/>
</dbReference>
<dbReference type="InterPro" id="IPR032466">
    <property type="entry name" value="Metal_Hydrolase"/>
</dbReference>
<dbReference type="InterPro" id="IPR050378">
    <property type="entry name" value="Metallo-dep_Hydrolases_sf"/>
</dbReference>
<dbReference type="NCBIfam" id="TIGR02033">
    <property type="entry name" value="D-hydantoinase"/>
    <property type="match status" value="1"/>
</dbReference>
<dbReference type="PANTHER" id="PTHR11647:SF1">
    <property type="entry name" value="COLLAPSIN RESPONSE MEDIATOR PROTEIN"/>
    <property type="match status" value="1"/>
</dbReference>
<dbReference type="PANTHER" id="PTHR11647">
    <property type="entry name" value="HYDRANTOINASE/DIHYDROPYRIMIDINASE FAMILY MEMBER"/>
    <property type="match status" value="1"/>
</dbReference>
<dbReference type="Pfam" id="PF01979">
    <property type="entry name" value="Amidohydro_1"/>
    <property type="match status" value="1"/>
</dbReference>
<dbReference type="SUPFAM" id="SSF51338">
    <property type="entry name" value="Composite domain of metallo-dependent hydrolases"/>
    <property type="match status" value="2"/>
</dbReference>
<dbReference type="SUPFAM" id="SSF51556">
    <property type="entry name" value="Metallo-dependent hydrolases"/>
    <property type="match status" value="1"/>
</dbReference>
<reference key="1">
    <citation type="journal article" date="2009" name="PLoS Genet.">
        <title>Organised genome dynamics in the Escherichia coli species results in highly diverse adaptive paths.</title>
        <authorList>
            <person name="Touchon M."/>
            <person name="Hoede C."/>
            <person name="Tenaillon O."/>
            <person name="Barbe V."/>
            <person name="Baeriswyl S."/>
            <person name="Bidet P."/>
            <person name="Bingen E."/>
            <person name="Bonacorsi S."/>
            <person name="Bouchier C."/>
            <person name="Bouvet O."/>
            <person name="Calteau A."/>
            <person name="Chiapello H."/>
            <person name="Clermont O."/>
            <person name="Cruveiller S."/>
            <person name="Danchin A."/>
            <person name="Diard M."/>
            <person name="Dossat C."/>
            <person name="Karoui M.E."/>
            <person name="Frapy E."/>
            <person name="Garry L."/>
            <person name="Ghigo J.M."/>
            <person name="Gilles A.M."/>
            <person name="Johnson J."/>
            <person name="Le Bouguenec C."/>
            <person name="Lescat M."/>
            <person name="Mangenot S."/>
            <person name="Martinez-Jehanne V."/>
            <person name="Matic I."/>
            <person name="Nassif X."/>
            <person name="Oztas S."/>
            <person name="Petit M.A."/>
            <person name="Pichon C."/>
            <person name="Rouy Z."/>
            <person name="Ruf C.S."/>
            <person name="Schneider D."/>
            <person name="Tourret J."/>
            <person name="Vacherie B."/>
            <person name="Vallenet D."/>
            <person name="Medigue C."/>
            <person name="Rocha E.P.C."/>
            <person name="Denamur E."/>
        </authorList>
    </citation>
    <scope>NUCLEOTIDE SEQUENCE [LARGE SCALE GENOMIC DNA]</scope>
    <source>
        <strain>UMN026 / ExPEC</strain>
    </source>
</reference>
<protein>
    <recommendedName>
        <fullName evidence="1">D-phenylhydantoinase</fullName>
        <ecNumber evidence="1">3.5.2.-</ecNumber>
    </recommendedName>
    <alternativeName>
        <fullName evidence="1">Hydantoin-utilizing enzyme HyuA</fullName>
    </alternativeName>
</protein>
<keyword id="KW-0378">Hydrolase</keyword>
<keyword id="KW-0479">Metal-binding</keyword>
<gene>
    <name evidence="1" type="primary">hyuA</name>
    <name type="ordered locus">ECUMN_3216</name>
</gene>
<evidence type="ECO:0000255" key="1">
    <source>
        <dbReference type="HAMAP-Rule" id="MF_01644"/>
    </source>
</evidence>